<gene>
    <name type="primary">ygaN</name>
    <name type="ordered locus">BSU08870</name>
</gene>
<dbReference type="EMBL" id="Z93102">
    <property type="protein sequence ID" value="CAB07524.1"/>
    <property type="molecule type" value="Genomic_DNA"/>
</dbReference>
<dbReference type="EMBL" id="AL009126">
    <property type="protein sequence ID" value="CAB12715.1"/>
    <property type="molecule type" value="Genomic_DNA"/>
</dbReference>
<dbReference type="PIR" id="A69817">
    <property type="entry name" value="A69817"/>
</dbReference>
<dbReference type="RefSeq" id="NP_388767.1">
    <property type="nucleotide sequence ID" value="NC_000964.3"/>
</dbReference>
<dbReference type="RefSeq" id="WP_003245073.1">
    <property type="nucleotide sequence ID" value="NZ_OZ025638.1"/>
</dbReference>
<dbReference type="FunCoup" id="P97028">
    <property type="interactions" value="121"/>
</dbReference>
<dbReference type="STRING" id="224308.BSU08870"/>
<dbReference type="PaxDb" id="224308-BSU08870"/>
<dbReference type="EnsemblBacteria" id="CAB12715">
    <property type="protein sequence ID" value="CAB12715"/>
    <property type="gene ID" value="BSU_08870"/>
</dbReference>
<dbReference type="GeneID" id="939249"/>
<dbReference type="KEGG" id="bsu:BSU08870"/>
<dbReference type="PATRIC" id="fig|224308.179.peg.957"/>
<dbReference type="InParanoid" id="P97028"/>
<dbReference type="OrthoDB" id="2900943at2"/>
<dbReference type="BioCyc" id="BSUB:BSU08870-MONOMER"/>
<dbReference type="Proteomes" id="UP000001570">
    <property type="component" value="Chromosome"/>
</dbReference>
<protein>
    <recommendedName>
        <fullName>Uncharacterized protein YgaN</fullName>
    </recommendedName>
</protein>
<sequence>MLSACGHSKQMEIKAADISDLEKNRMDVAASQAFTAEAVNIGEGISSADMYIEHYQKGKLVERFGPVRADYSEEKTDTIQFVYFENEEGEGKNKHTTIHFGIVDKQGTIAADSSVKRDDSTTQEMTQNISSPEPITFEKPALIGSSIRGTDETMHTSEHKKELIKHQDALLYYVELHH</sequence>
<name>YGAN_BACSU</name>
<reference key="1">
    <citation type="submission" date="1997-03" db="EMBL/GenBank/DDBJ databases">
        <authorList>
            <person name="Cummings N.J."/>
            <person name="Ruiz-Teran F."/>
            <person name="Connerton I.F."/>
        </authorList>
    </citation>
    <scope>NUCLEOTIDE SEQUENCE [GENOMIC DNA]</scope>
    <source>
        <strain>168</strain>
    </source>
</reference>
<reference key="2">
    <citation type="journal article" date="1997" name="Nature">
        <title>The complete genome sequence of the Gram-positive bacterium Bacillus subtilis.</title>
        <authorList>
            <person name="Kunst F."/>
            <person name="Ogasawara N."/>
            <person name="Moszer I."/>
            <person name="Albertini A.M."/>
            <person name="Alloni G."/>
            <person name="Azevedo V."/>
            <person name="Bertero M.G."/>
            <person name="Bessieres P."/>
            <person name="Bolotin A."/>
            <person name="Borchert S."/>
            <person name="Borriss R."/>
            <person name="Boursier L."/>
            <person name="Brans A."/>
            <person name="Braun M."/>
            <person name="Brignell S.C."/>
            <person name="Bron S."/>
            <person name="Brouillet S."/>
            <person name="Bruschi C.V."/>
            <person name="Caldwell B."/>
            <person name="Capuano V."/>
            <person name="Carter N.M."/>
            <person name="Choi S.-K."/>
            <person name="Codani J.-J."/>
            <person name="Connerton I.F."/>
            <person name="Cummings N.J."/>
            <person name="Daniel R.A."/>
            <person name="Denizot F."/>
            <person name="Devine K.M."/>
            <person name="Duesterhoeft A."/>
            <person name="Ehrlich S.D."/>
            <person name="Emmerson P.T."/>
            <person name="Entian K.-D."/>
            <person name="Errington J."/>
            <person name="Fabret C."/>
            <person name="Ferrari E."/>
            <person name="Foulger D."/>
            <person name="Fritz C."/>
            <person name="Fujita M."/>
            <person name="Fujita Y."/>
            <person name="Fuma S."/>
            <person name="Galizzi A."/>
            <person name="Galleron N."/>
            <person name="Ghim S.-Y."/>
            <person name="Glaser P."/>
            <person name="Goffeau A."/>
            <person name="Golightly E.J."/>
            <person name="Grandi G."/>
            <person name="Guiseppi G."/>
            <person name="Guy B.J."/>
            <person name="Haga K."/>
            <person name="Haiech J."/>
            <person name="Harwood C.R."/>
            <person name="Henaut A."/>
            <person name="Hilbert H."/>
            <person name="Holsappel S."/>
            <person name="Hosono S."/>
            <person name="Hullo M.-F."/>
            <person name="Itaya M."/>
            <person name="Jones L.-M."/>
            <person name="Joris B."/>
            <person name="Karamata D."/>
            <person name="Kasahara Y."/>
            <person name="Klaerr-Blanchard M."/>
            <person name="Klein C."/>
            <person name="Kobayashi Y."/>
            <person name="Koetter P."/>
            <person name="Koningstein G."/>
            <person name="Krogh S."/>
            <person name="Kumano M."/>
            <person name="Kurita K."/>
            <person name="Lapidus A."/>
            <person name="Lardinois S."/>
            <person name="Lauber J."/>
            <person name="Lazarevic V."/>
            <person name="Lee S.-M."/>
            <person name="Levine A."/>
            <person name="Liu H."/>
            <person name="Masuda S."/>
            <person name="Mauel C."/>
            <person name="Medigue C."/>
            <person name="Medina N."/>
            <person name="Mellado R.P."/>
            <person name="Mizuno M."/>
            <person name="Moestl D."/>
            <person name="Nakai S."/>
            <person name="Noback M."/>
            <person name="Noone D."/>
            <person name="O'Reilly M."/>
            <person name="Ogawa K."/>
            <person name="Ogiwara A."/>
            <person name="Oudega B."/>
            <person name="Park S.-H."/>
            <person name="Parro V."/>
            <person name="Pohl T.M."/>
            <person name="Portetelle D."/>
            <person name="Porwollik S."/>
            <person name="Prescott A.M."/>
            <person name="Presecan E."/>
            <person name="Pujic P."/>
            <person name="Purnelle B."/>
            <person name="Rapoport G."/>
            <person name="Rey M."/>
            <person name="Reynolds S."/>
            <person name="Rieger M."/>
            <person name="Rivolta C."/>
            <person name="Rocha E."/>
            <person name="Roche B."/>
            <person name="Rose M."/>
            <person name="Sadaie Y."/>
            <person name="Sato T."/>
            <person name="Scanlan E."/>
            <person name="Schleich S."/>
            <person name="Schroeter R."/>
            <person name="Scoffone F."/>
            <person name="Sekiguchi J."/>
            <person name="Sekowska A."/>
            <person name="Seror S.J."/>
            <person name="Serror P."/>
            <person name="Shin B.-S."/>
            <person name="Soldo B."/>
            <person name="Sorokin A."/>
            <person name="Tacconi E."/>
            <person name="Takagi T."/>
            <person name="Takahashi H."/>
            <person name="Takemaru K."/>
            <person name="Takeuchi M."/>
            <person name="Tamakoshi A."/>
            <person name="Tanaka T."/>
            <person name="Terpstra P."/>
            <person name="Tognoni A."/>
            <person name="Tosato V."/>
            <person name="Uchiyama S."/>
            <person name="Vandenbol M."/>
            <person name="Vannier F."/>
            <person name="Vassarotti A."/>
            <person name="Viari A."/>
            <person name="Wambutt R."/>
            <person name="Wedler E."/>
            <person name="Wedler H."/>
            <person name="Weitzenegger T."/>
            <person name="Winters P."/>
            <person name="Wipat A."/>
            <person name="Yamamoto H."/>
            <person name="Yamane K."/>
            <person name="Yasumoto K."/>
            <person name="Yata K."/>
            <person name="Yoshida K."/>
            <person name="Yoshikawa H.-F."/>
            <person name="Zumstein E."/>
            <person name="Yoshikawa H."/>
            <person name="Danchin A."/>
        </authorList>
    </citation>
    <scope>NUCLEOTIDE SEQUENCE [LARGE SCALE GENOMIC DNA]</scope>
    <source>
        <strain>168</strain>
    </source>
</reference>
<proteinExistence type="predicted"/>
<feature type="chain" id="PRO_0000049544" description="Uncharacterized protein YgaN">
    <location>
        <begin position="1"/>
        <end position="178"/>
    </location>
</feature>
<organism>
    <name type="scientific">Bacillus subtilis (strain 168)</name>
    <dbReference type="NCBI Taxonomy" id="224308"/>
    <lineage>
        <taxon>Bacteria</taxon>
        <taxon>Bacillati</taxon>
        <taxon>Bacillota</taxon>
        <taxon>Bacilli</taxon>
        <taxon>Bacillales</taxon>
        <taxon>Bacillaceae</taxon>
        <taxon>Bacillus</taxon>
    </lineage>
</organism>
<keyword id="KW-1185">Reference proteome</keyword>
<accession>P97028</accession>